<reference key="1">
    <citation type="journal article" date="2003" name="Proc. Natl. Acad. Sci. U.S.A.">
        <title>Complete genome sequence and analysis of Wolinella succinogenes.</title>
        <authorList>
            <person name="Baar C."/>
            <person name="Eppinger M."/>
            <person name="Raddatz G."/>
            <person name="Simon J."/>
            <person name="Lanz C."/>
            <person name="Klimmek O."/>
            <person name="Nandakumar R."/>
            <person name="Gross R."/>
            <person name="Rosinus A."/>
            <person name="Keller H."/>
            <person name="Jagtap P."/>
            <person name="Linke B."/>
            <person name="Meyer F."/>
            <person name="Lederer H."/>
            <person name="Schuster S.C."/>
        </authorList>
    </citation>
    <scope>NUCLEOTIDE SEQUENCE [LARGE SCALE GENOMIC DNA]</scope>
    <source>
        <strain>ATCC 29543 / DSM 1740 / CCUG 13145 / JCM 31913 / LMG 7466 / NCTC 11488 / FDC 602W</strain>
    </source>
</reference>
<proteinExistence type="inferred from homology"/>
<comment type="function">
    <text evidence="2 3">DNA-dependent RNA polymerase catalyzes the transcription of DNA into RNA using the four ribonucleoside triphosphates as substrates.</text>
</comment>
<comment type="catalytic activity">
    <reaction evidence="2 3">
        <text>RNA(n) + a ribonucleoside 5'-triphosphate = RNA(n+1) + diphosphate</text>
        <dbReference type="Rhea" id="RHEA:21248"/>
        <dbReference type="Rhea" id="RHEA-COMP:14527"/>
        <dbReference type="Rhea" id="RHEA-COMP:17342"/>
        <dbReference type="ChEBI" id="CHEBI:33019"/>
        <dbReference type="ChEBI" id="CHEBI:61557"/>
        <dbReference type="ChEBI" id="CHEBI:140395"/>
        <dbReference type="EC" id="2.7.7.6"/>
    </reaction>
</comment>
<comment type="cofactor">
    <cofactor evidence="3">
        <name>Mg(2+)</name>
        <dbReference type="ChEBI" id="CHEBI:18420"/>
    </cofactor>
    <text evidence="3">Binds 1 Mg(2+) ion per subunit.</text>
</comment>
<comment type="cofactor">
    <cofactor evidence="3">
        <name>Zn(2+)</name>
        <dbReference type="ChEBI" id="CHEBI:29105"/>
    </cofactor>
    <text evidence="3">Binds 2 Zn(2+) ions per subunit.</text>
</comment>
<comment type="subunit">
    <text evidence="2 3">The RNAP catalytic core consists of 2 alpha, 1 beta/beta' and 1 omega subunit. When a sigma factor is associated with the core the holoenzyme is formed, which can initiate transcription.</text>
</comment>
<comment type="miscellaneous">
    <text evidence="1">Fusion of rpoB and rpoC occurs naturally in Helicobacter species and at least some Wolbachia; the protein has been artificially split in two in H.pylori. The split protein seems to function normally.</text>
</comment>
<comment type="similarity">
    <text evidence="4">In the N-terminal section; belongs to the RNA polymerase beta chain family.</text>
</comment>
<comment type="similarity">
    <text evidence="4">In the C-terminal section; belongs to the RNA polymerase beta' chain family.</text>
</comment>
<accession>Q7MA56</accession>
<feature type="chain" id="PRO_0000048006" description="Bifunctional DNA-directed RNA polymerase subunit beta-beta'">
    <location>
        <begin position="1"/>
        <end position="2883"/>
    </location>
</feature>
<feature type="region of interest" description="DNA-directed RNA polymerase subunit beta">
    <location>
        <begin position="1"/>
        <end position="1377"/>
    </location>
</feature>
<feature type="region of interest" description="DNA-directed RNA polymerase subunit beta'">
    <location>
        <begin position="1382"/>
        <end position="2883"/>
    </location>
</feature>
<feature type="binding site" evidence="3">
    <location>
        <position position="1447"/>
    </location>
    <ligand>
        <name>Zn(2+)</name>
        <dbReference type="ChEBI" id="CHEBI:29105"/>
        <label>1</label>
    </ligand>
</feature>
<feature type="binding site" evidence="3">
    <location>
        <position position="1449"/>
    </location>
    <ligand>
        <name>Zn(2+)</name>
        <dbReference type="ChEBI" id="CHEBI:29105"/>
        <label>1</label>
    </ligand>
</feature>
<feature type="binding site" evidence="3">
    <location>
        <position position="1462"/>
    </location>
    <ligand>
        <name>Zn(2+)</name>
        <dbReference type="ChEBI" id="CHEBI:29105"/>
        <label>1</label>
    </ligand>
</feature>
<feature type="binding site" evidence="3">
    <location>
        <position position="1465"/>
    </location>
    <ligand>
        <name>Zn(2+)</name>
        <dbReference type="ChEBI" id="CHEBI:29105"/>
        <label>1</label>
    </ligand>
</feature>
<feature type="binding site" evidence="3">
    <location>
        <position position="1846"/>
    </location>
    <ligand>
        <name>Mg(2+)</name>
        <dbReference type="ChEBI" id="CHEBI:18420"/>
    </ligand>
</feature>
<feature type="binding site" evidence="3">
    <location>
        <position position="1848"/>
    </location>
    <ligand>
        <name>Mg(2+)</name>
        <dbReference type="ChEBI" id="CHEBI:18420"/>
    </ligand>
</feature>
<feature type="binding site" evidence="3">
    <location>
        <position position="1850"/>
    </location>
    <ligand>
        <name>Mg(2+)</name>
        <dbReference type="ChEBI" id="CHEBI:18420"/>
    </ligand>
</feature>
<feature type="binding site" evidence="3">
    <location>
        <position position="2176"/>
    </location>
    <ligand>
        <name>Zn(2+)</name>
        <dbReference type="ChEBI" id="CHEBI:29105"/>
        <label>2</label>
    </ligand>
</feature>
<feature type="binding site" evidence="3">
    <location>
        <position position="2250"/>
    </location>
    <ligand>
        <name>Zn(2+)</name>
        <dbReference type="ChEBI" id="CHEBI:29105"/>
        <label>2</label>
    </ligand>
</feature>
<feature type="binding site" evidence="3">
    <location>
        <position position="2257"/>
    </location>
    <ligand>
        <name>Zn(2+)</name>
        <dbReference type="ChEBI" id="CHEBI:29105"/>
        <label>2</label>
    </ligand>
</feature>
<feature type="binding site" evidence="3">
    <location>
        <position position="2260"/>
    </location>
    <ligand>
        <name>Zn(2+)</name>
        <dbReference type="ChEBI" id="CHEBI:29105"/>
        <label>2</label>
    </ligand>
</feature>
<evidence type="ECO:0000250" key="1">
    <source>
        <dbReference type="UniProtKB" id="O25806"/>
    </source>
</evidence>
<evidence type="ECO:0000255" key="2">
    <source>
        <dbReference type="HAMAP-Rule" id="MF_01321"/>
    </source>
</evidence>
<evidence type="ECO:0000255" key="3">
    <source>
        <dbReference type="HAMAP-Rule" id="MF_01322"/>
    </source>
</evidence>
<evidence type="ECO:0000305" key="4"/>
<protein>
    <recommendedName>
        <fullName>Bifunctional DNA-directed RNA polymerase subunit beta-beta'</fullName>
        <ecNumber evidence="2 3">2.7.7.6</ecNumber>
    </recommendedName>
    <domain>
        <recommendedName>
            <fullName evidence="2">DNA-directed RNA polymerase subunit beta</fullName>
        </recommendedName>
        <alternativeName>
            <fullName evidence="2">RNA polymerase subunit beta</fullName>
        </alternativeName>
        <alternativeName>
            <fullName evidence="2">Transcriptase subunit beta</fullName>
        </alternativeName>
    </domain>
    <domain>
        <recommendedName>
            <fullName evidence="3">DNA-directed RNA polymerase subunit beta'</fullName>
        </recommendedName>
        <alternativeName>
            <fullName evidence="3">RNA polymerase subunit beta'</fullName>
        </alternativeName>
        <alternativeName>
            <fullName evidence="3">Transcriptase subunit beta'</fullName>
        </alternativeName>
    </domain>
</protein>
<sequence length="2883" mass="321724">MPTTLKSGNRLRVDFTKIPQNIAIPNLLQLQRNSYDSFLMPIENGESGIEKVFRSIFPIHDAQNRITLEYAGCEYGKPRYTVREAMERGLTYSVPLKVKIRLVLWEKDEKTGEKLGVKDIKEQSIFVREIPLMTDRTSFIINGVERVVVNQLHRSPGVIFKEEESATSSNKLIYTGQIIPDRGSWLYFEYDAKDTLYVRINKRRKVPVTILFRALGYSKQDVIKTFYPLMKVKAEAGKYLMPFNPEEFIGRIEFDIRDTSGNLIIGAGKRLTQKRAKTLKEQGLEWVEYPVEILLDRHLAEPIVDKESGEVILDTLVQLDEGKLKKIHELGIKEFTIANDLAQGVDASIIHSFVADNESLKLLKQTEKIDDDNDLAAIRIYKVMRPGEPVTKDAAKSFVQQLFFDPERYDLTRVGRMKMNHKLDIEVPDYVTVLTHEDIICTVKYLIRVKNGQGHIDDRDHLGNRRIRAIGELLANELHTGLVKMQKAIRDKLTTMSGNLDELMPHDLVNSKMITSTILEFFTGGQLSQFMDQTNPLSEVTHKRRLSALGEGGLVKERAGFEVRDVHPTHYGRICPIETPEGQNIGLINTLSTYSKVNDLGFIEAPYKKVIEGKVTDEVVYLTATQEEGLVIAPASTVLETDGAIKEDLIETRIDGEIVLSEKSKVDLIDLSPGMVVGVAASLIPFLEHDDANRALMGSNMQRQAVPLLNPDAPVVGTGMEKTVARDSWEAIKATRGGIVEKVDAKNIYILGEDENGAYIDHYSLQKNLRTNQNTCFSQAPIVHEGETIEAGQVIADGPNMDKGELALGKNIRVAFMPWNGYNFEDAIVVSEKLIREDTFTSIHIYEKEIEARELKHGVEEITRDIPNVREEELAHLDESGIVKIGTFVNAGMILVGKVSPKGEVKPTPEERLLRAIFGEKAGHVVNKSLYCPPSLEGTVVDVKIFTKKGYDKDQRAIAAYEEEKARLDLEHHDKLMMLDREEMLRLTSMLSKEPLASDVVVNEKSYKKGELIEKGDLAKINRFAMNALVKSFPKSIQEAYDQLKSNFLEQKKNLSEEHEEKLSVLEKDDILPSGVVKLVKIYVATKRKLKVGDKMAGRHGNKGIVSNIVREIDMPYTKDGEPVEIVLNPLGVPSRMNIGQILEVHLGLVGKKLGAQINEMFENQTKDWMGALRAKIIEIAQVSKMTGVDEFVSSLSDEALLSYARDWRRGVKFATPVFEGVNEEEFTKLFELARIDTDGKTELYDGKTGAKMKERVNVGYMYMLKLHHLVDEKVHARSTGPYSLVTQQPVGGKALFGGQRFGEMEVWALEAYGAAHTLKEMLTVKSDDVEGRVKAYKAITRGEPVKESEIPETFYVLTKELQSLALDVTVYGETEEDSFVPMPIKEDDRPSDFNAFQLMLASPDKIMSWSNGEVKKPETINYRTLKPERDGLFCAKIFGPVRDYECLCGKYKKMRYKGVVCEKCGVEVTSSKVRRSRMGHIELVTPVAHIWYVNSLPSRIGTLLGVKMKDLERVLYYEAYIVKTPGEAFYDNEGTKPVAKYDVLNEEQYQSLNQRFEHTGFVAQMGGEAVKELLAQIDLVELLHTLREEIKATNSEAKKKTIIKRLKVVESFINSGNRPEWMMLTVLPVLPPDLRPLVALDGGKFAVSDVNDLYRRVINRNQRLKRLMELDAPEIIIRNEKRMLQEAVDALFDNGRNANAVKGANKRPLKSLSEIIKGKQGRFRQNLLGKRVDFSGRSVIVVGPNLRMDQCGLPKGMALELFKPHILAKLEEKGYATTLKQAKKMIEQKTNEVWECLQEIVEGYPIMLNRAPTLHKQSIQAFHPKLIDGKAIQLHPLVCSAFNADFDGDQMAVHVPLSQEAITECKLLMLSSMNILLPASGKAVTVPSQDMVLGLYYLSLAKEGSRGEHKLFSNVDEIMIALDADAVEINTKIRTIVDRRPLYTTVGRMIIKSILPDFVPVSLWNKVLKKKDIAALIDHVYKEGGLGITARFLDNLKDLGFKYATTAGISISSDDIRVPDIKRKTVEAAKKKVKEIQAQFGAGLLTEQERYNKIIDVWTDTNNGLGSEMMKLVQADKGGFNSIYMMADSGARGSAAQIRQLSAMRGLMAKPDGTIIETPIISNFKEGLNVLEYFISTHGARKGLADTALKTANAGYLTRKLIDVSQNVKIVMEDCGTHEGVEITDIAIGSELIEPLEERIFGRVVAEDVIDPITNEILVSEGSLIDEEMAKKIKEAGVKAVIIRTPVTCKAEKGVCSKCYGLNLGEGKVTNPGEAVGVVAAQSIGEPGTQLTLRTFHIGGTASRSQEERQVVVEKEGFIRYYNIKTYKNKEGKTVVANRRNAAVLLVEPKIKAPFEGELRVDTAHEEMVISVIGKSETVRYSLRKSDVAKPNELAGVTGKIEGKFYIPYGSGTKVREDGSIVEIIKDGWNIPNRIPYASELKVEDNAPITQKIFSKEKGIVKYYRLKGDHLERYKEITKGEKVTEKGIFAVIADTNDREAIRHYIARGSIIELADGAEVKPDSLVASPASSEQIVIADWDPYSNPIIAEEAGVVKYEDIIPGVTVTEQVDELTGQSRLVVNEYLPTSFKPTIVVASAAGNLIRYALDSKTAIFVGDGAEVEVADVLAKTPKALAKSKDITGGLPRVSELFEARKPKDPAVLAEIDGVVSFGKPIRGKERIIITADDGRTTEYAVDKSKHILVHHGEFVHAGESITDGIVSSHDILRISGEKELHKYIVSEVQQVYRRQGVNIADKHIEIIVSQMLRQVRIVDSGNTKFIEGDLVSKRHFKEENERTIRLGGEPAIAEPVLLGITRAAIGSDSIISAASFQETTKVLTEASIAAKIDFLEDLKENVVLGRMIPVGTGIYKNKKIRIKEKTEGA</sequence>
<organism>
    <name type="scientific">Wolinella succinogenes (strain ATCC 29543 / DSM 1740 / CCUG 13145 / JCM 31913 / LMG 7466 / NCTC 11488 / FDC 602W)</name>
    <name type="common">Vibrio succinogenes</name>
    <dbReference type="NCBI Taxonomy" id="273121"/>
    <lineage>
        <taxon>Bacteria</taxon>
        <taxon>Pseudomonadati</taxon>
        <taxon>Campylobacterota</taxon>
        <taxon>Epsilonproteobacteria</taxon>
        <taxon>Campylobacterales</taxon>
        <taxon>Helicobacteraceae</taxon>
        <taxon>Wolinella</taxon>
    </lineage>
</organism>
<keyword id="KW-0240">DNA-directed RNA polymerase</keyword>
<keyword id="KW-0460">Magnesium</keyword>
<keyword id="KW-0479">Metal-binding</keyword>
<keyword id="KW-0548">Nucleotidyltransferase</keyword>
<keyword id="KW-1185">Reference proteome</keyword>
<keyword id="KW-0804">Transcription</keyword>
<keyword id="KW-0808">Transferase</keyword>
<keyword id="KW-0862">Zinc</keyword>
<name>RPOBC_WOLSU</name>
<dbReference type="EC" id="2.7.7.6" evidence="2 3"/>
<dbReference type="EMBL" id="BX571658">
    <property type="protein sequence ID" value="CAE09607.1"/>
    <property type="molecule type" value="Genomic_DNA"/>
</dbReference>
<dbReference type="RefSeq" id="WP_011138407.1">
    <property type="nucleotide sequence ID" value="NC_005090.1"/>
</dbReference>
<dbReference type="SMR" id="Q7MA56"/>
<dbReference type="STRING" id="273121.WS0467"/>
<dbReference type="KEGG" id="wsu:WS0467"/>
<dbReference type="eggNOG" id="COG0085">
    <property type="taxonomic scope" value="Bacteria"/>
</dbReference>
<dbReference type="eggNOG" id="COG0086">
    <property type="taxonomic scope" value="Bacteria"/>
</dbReference>
<dbReference type="HOGENOM" id="CLU_000524_0_1_7"/>
<dbReference type="Proteomes" id="UP000000422">
    <property type="component" value="Chromosome"/>
</dbReference>
<dbReference type="GO" id="GO:0000428">
    <property type="term" value="C:DNA-directed RNA polymerase complex"/>
    <property type="evidence" value="ECO:0007669"/>
    <property type="project" value="UniProtKB-KW"/>
</dbReference>
<dbReference type="GO" id="GO:0003677">
    <property type="term" value="F:DNA binding"/>
    <property type="evidence" value="ECO:0007669"/>
    <property type="project" value="UniProtKB-UniRule"/>
</dbReference>
<dbReference type="GO" id="GO:0003899">
    <property type="term" value="F:DNA-directed RNA polymerase activity"/>
    <property type="evidence" value="ECO:0007669"/>
    <property type="project" value="UniProtKB-UniRule"/>
</dbReference>
<dbReference type="GO" id="GO:0000287">
    <property type="term" value="F:magnesium ion binding"/>
    <property type="evidence" value="ECO:0007669"/>
    <property type="project" value="UniProtKB-UniRule"/>
</dbReference>
<dbReference type="GO" id="GO:0032549">
    <property type="term" value="F:ribonucleoside binding"/>
    <property type="evidence" value="ECO:0007669"/>
    <property type="project" value="InterPro"/>
</dbReference>
<dbReference type="GO" id="GO:0008270">
    <property type="term" value="F:zinc ion binding"/>
    <property type="evidence" value="ECO:0007669"/>
    <property type="project" value="UniProtKB-UniRule"/>
</dbReference>
<dbReference type="GO" id="GO:0006351">
    <property type="term" value="P:DNA-templated transcription"/>
    <property type="evidence" value="ECO:0007669"/>
    <property type="project" value="UniProtKB-UniRule"/>
</dbReference>
<dbReference type="CDD" id="cd00653">
    <property type="entry name" value="RNA_pol_B_RPB2"/>
    <property type="match status" value="1"/>
</dbReference>
<dbReference type="CDD" id="cd02655">
    <property type="entry name" value="RNAP_beta'_C"/>
    <property type="match status" value="1"/>
</dbReference>
<dbReference type="CDD" id="cd01609">
    <property type="entry name" value="RNAP_beta'_N"/>
    <property type="match status" value="1"/>
</dbReference>
<dbReference type="FunFam" id="1.10.132.30:FF:000003">
    <property type="entry name" value="DNA-directed RNA polymerase subunit beta"/>
    <property type="match status" value="1"/>
</dbReference>
<dbReference type="Gene3D" id="1.10.132.30">
    <property type="match status" value="1"/>
</dbReference>
<dbReference type="Gene3D" id="1.10.150.390">
    <property type="match status" value="1"/>
</dbReference>
<dbReference type="Gene3D" id="1.10.1790.20">
    <property type="match status" value="1"/>
</dbReference>
<dbReference type="Gene3D" id="1.10.40.90">
    <property type="match status" value="1"/>
</dbReference>
<dbReference type="Gene3D" id="2.40.40.20">
    <property type="match status" value="1"/>
</dbReference>
<dbReference type="Gene3D" id="2.40.50.100">
    <property type="match status" value="4"/>
</dbReference>
<dbReference type="Gene3D" id="2.40.50.150">
    <property type="match status" value="1"/>
</dbReference>
<dbReference type="Gene3D" id="3.90.1100.10">
    <property type="match status" value="2"/>
</dbReference>
<dbReference type="Gene3D" id="2.30.150.10">
    <property type="entry name" value="DNA-directed RNA polymerase, beta subunit, external 1 domain"/>
    <property type="match status" value="1"/>
</dbReference>
<dbReference type="Gene3D" id="2.40.270.10">
    <property type="entry name" value="DNA-directed RNA polymerase, subunit 2, domain 6"/>
    <property type="match status" value="1"/>
</dbReference>
<dbReference type="Gene3D" id="3.90.1800.10">
    <property type="entry name" value="RNA polymerase alpha subunit dimerisation domain"/>
    <property type="match status" value="1"/>
</dbReference>
<dbReference type="Gene3D" id="4.10.860.120">
    <property type="entry name" value="RNA polymerase II, clamp domain"/>
    <property type="match status" value="1"/>
</dbReference>
<dbReference type="Gene3D" id="1.10.274.100">
    <property type="entry name" value="RNA polymerase Rpb1, domain 3"/>
    <property type="match status" value="1"/>
</dbReference>
<dbReference type="Gene3D" id="3.90.1110.10">
    <property type="entry name" value="RNA polymerase Rpb2, domain 2"/>
    <property type="match status" value="1"/>
</dbReference>
<dbReference type="HAMAP" id="MF_01321">
    <property type="entry name" value="RNApol_bact_RpoB"/>
    <property type="match status" value="1"/>
</dbReference>
<dbReference type="HAMAP" id="MF_01322">
    <property type="entry name" value="RNApol_bact_RpoC"/>
    <property type="match status" value="1"/>
</dbReference>
<dbReference type="InterPro" id="IPR042107">
    <property type="entry name" value="DNA-dir_RNA_pol_bsu_ext_1_sf"/>
</dbReference>
<dbReference type="InterPro" id="IPR019462">
    <property type="entry name" value="DNA-dir_RNA_pol_bsu_external_1"/>
</dbReference>
<dbReference type="InterPro" id="IPR015712">
    <property type="entry name" value="DNA-dir_RNA_pol_su2"/>
</dbReference>
<dbReference type="InterPro" id="IPR007120">
    <property type="entry name" value="DNA-dir_RNAP_su2_dom"/>
</dbReference>
<dbReference type="InterPro" id="IPR037033">
    <property type="entry name" value="DNA-dir_RNAP_su2_hyb_sf"/>
</dbReference>
<dbReference type="InterPro" id="IPR045867">
    <property type="entry name" value="DNA-dir_RpoC_beta_prime"/>
</dbReference>
<dbReference type="InterPro" id="IPR012754">
    <property type="entry name" value="DNA-dir_RpoC_beta_prime_bact"/>
</dbReference>
<dbReference type="InterPro" id="IPR000722">
    <property type="entry name" value="RNA_pol_asu"/>
</dbReference>
<dbReference type="InterPro" id="IPR010243">
    <property type="entry name" value="RNA_pol_bsu_bac"/>
</dbReference>
<dbReference type="InterPro" id="IPR007121">
    <property type="entry name" value="RNA_pol_bsu_CS"/>
</dbReference>
<dbReference type="InterPro" id="IPR007644">
    <property type="entry name" value="RNA_pol_bsu_protrusion"/>
</dbReference>
<dbReference type="InterPro" id="IPR006592">
    <property type="entry name" value="RNA_pol_N"/>
</dbReference>
<dbReference type="InterPro" id="IPR007080">
    <property type="entry name" value="RNA_pol_Rpb1_1"/>
</dbReference>
<dbReference type="InterPro" id="IPR007066">
    <property type="entry name" value="RNA_pol_Rpb1_3"/>
</dbReference>
<dbReference type="InterPro" id="IPR042102">
    <property type="entry name" value="RNA_pol_Rpb1_3_sf"/>
</dbReference>
<dbReference type="InterPro" id="IPR007083">
    <property type="entry name" value="RNA_pol_Rpb1_4"/>
</dbReference>
<dbReference type="InterPro" id="IPR007081">
    <property type="entry name" value="RNA_pol_Rpb1_5"/>
</dbReference>
<dbReference type="InterPro" id="IPR044893">
    <property type="entry name" value="RNA_pol_Rpb1_clamp_domain"/>
</dbReference>
<dbReference type="InterPro" id="IPR007642">
    <property type="entry name" value="RNA_pol_Rpb2_2"/>
</dbReference>
<dbReference type="InterPro" id="IPR037034">
    <property type="entry name" value="RNA_pol_Rpb2_2_sf"/>
</dbReference>
<dbReference type="InterPro" id="IPR007645">
    <property type="entry name" value="RNA_pol_Rpb2_3"/>
</dbReference>
<dbReference type="InterPro" id="IPR007641">
    <property type="entry name" value="RNA_pol_Rpb2_7"/>
</dbReference>
<dbReference type="InterPro" id="IPR014724">
    <property type="entry name" value="RNA_pol_RPB2_OB-fold"/>
</dbReference>
<dbReference type="InterPro" id="IPR038120">
    <property type="entry name" value="Rpb1_funnel_sf"/>
</dbReference>
<dbReference type="NCBIfam" id="NF001616">
    <property type="entry name" value="PRK00405.1"/>
    <property type="match status" value="1"/>
</dbReference>
<dbReference type="NCBIfam" id="NF007172">
    <property type="entry name" value="PRK09603.1"/>
    <property type="match status" value="1"/>
</dbReference>
<dbReference type="NCBIfam" id="TIGR02013">
    <property type="entry name" value="rpoB"/>
    <property type="match status" value="1"/>
</dbReference>
<dbReference type="NCBIfam" id="TIGR02386">
    <property type="entry name" value="rpoC_TIGR"/>
    <property type="match status" value="1"/>
</dbReference>
<dbReference type="PANTHER" id="PTHR19376">
    <property type="entry name" value="DNA-DIRECTED RNA POLYMERASE"/>
    <property type="match status" value="1"/>
</dbReference>
<dbReference type="PANTHER" id="PTHR19376:SF54">
    <property type="entry name" value="DNA-DIRECTED RNA POLYMERASE SUBUNIT BETA"/>
    <property type="match status" value="1"/>
</dbReference>
<dbReference type="Pfam" id="PF04997">
    <property type="entry name" value="RNA_pol_Rpb1_1"/>
    <property type="match status" value="1"/>
</dbReference>
<dbReference type="Pfam" id="PF00623">
    <property type="entry name" value="RNA_pol_Rpb1_2"/>
    <property type="match status" value="1"/>
</dbReference>
<dbReference type="Pfam" id="PF04983">
    <property type="entry name" value="RNA_pol_Rpb1_3"/>
    <property type="match status" value="1"/>
</dbReference>
<dbReference type="Pfam" id="PF05000">
    <property type="entry name" value="RNA_pol_Rpb1_4"/>
    <property type="match status" value="1"/>
</dbReference>
<dbReference type="Pfam" id="PF04998">
    <property type="entry name" value="RNA_pol_Rpb1_5"/>
    <property type="match status" value="1"/>
</dbReference>
<dbReference type="Pfam" id="PF04563">
    <property type="entry name" value="RNA_pol_Rpb2_1"/>
    <property type="match status" value="1"/>
</dbReference>
<dbReference type="Pfam" id="PF04561">
    <property type="entry name" value="RNA_pol_Rpb2_2"/>
    <property type="match status" value="2"/>
</dbReference>
<dbReference type="Pfam" id="PF04565">
    <property type="entry name" value="RNA_pol_Rpb2_3"/>
    <property type="match status" value="1"/>
</dbReference>
<dbReference type="Pfam" id="PF10385">
    <property type="entry name" value="RNA_pol_Rpb2_45"/>
    <property type="match status" value="1"/>
</dbReference>
<dbReference type="Pfam" id="PF00562">
    <property type="entry name" value="RNA_pol_Rpb2_6"/>
    <property type="match status" value="1"/>
</dbReference>
<dbReference type="Pfam" id="PF04560">
    <property type="entry name" value="RNA_pol_Rpb2_7"/>
    <property type="match status" value="1"/>
</dbReference>
<dbReference type="SMART" id="SM00663">
    <property type="entry name" value="RPOLA_N"/>
    <property type="match status" value="1"/>
</dbReference>
<dbReference type="SUPFAM" id="SSF64484">
    <property type="entry name" value="beta and beta-prime subunits of DNA dependent RNA-polymerase"/>
    <property type="match status" value="2"/>
</dbReference>
<dbReference type="PROSITE" id="PS01166">
    <property type="entry name" value="RNA_POL_BETA"/>
    <property type="match status" value="1"/>
</dbReference>
<gene>
    <name type="primary">rpoBC</name>
    <name type="ordered locus">WS0467</name>
</gene>